<protein>
    <recommendedName>
        <fullName evidence="7">U-actitoxin-Avd3n</fullName>
        <shortName evidence="7">U-AITX-Avd3n</shortName>
    </recommendedName>
    <alternativeName>
        <fullName evidence="6">AsKC11</fullName>
    </alternativeName>
</protein>
<organism>
    <name type="scientific">Anemonia viridis</name>
    <name type="common">Snakelocks anemone</name>
    <dbReference type="NCBI Taxonomy" id="51769"/>
    <lineage>
        <taxon>Eukaryota</taxon>
        <taxon>Metazoa</taxon>
        <taxon>Cnidaria</taxon>
        <taxon>Anthozoa</taxon>
        <taxon>Hexacorallia</taxon>
        <taxon>Actiniaria</taxon>
        <taxon>Actiniidae</taxon>
        <taxon>Anemonia</taxon>
    </lineage>
</organism>
<name>VKTB_ANEVI</name>
<feature type="signal peptide" evidence="2">
    <location>
        <begin position="1"/>
        <end position="16"/>
    </location>
</feature>
<feature type="chain" id="PRO_0000433769" description="U-actitoxin-Avd3n" evidence="5">
    <location>
        <begin position="17"/>
        <end position="75"/>
    </location>
</feature>
<feature type="propeptide" id="PRO_0000457566" evidence="9">
    <location>
        <begin position="76"/>
        <end position="87"/>
    </location>
</feature>
<feature type="domain" description="BPTI/Kunitz inhibitor" evidence="4">
    <location>
        <begin position="21"/>
        <end position="71"/>
    </location>
</feature>
<feature type="site" description="Reactive bond" evidence="1">
    <location>
        <begin position="31"/>
        <end position="32"/>
    </location>
</feature>
<feature type="disulfide bond" evidence="4">
    <location>
        <begin position="21"/>
        <end position="71"/>
    </location>
</feature>
<feature type="disulfide bond" evidence="4">
    <location>
        <begin position="30"/>
        <end position="54"/>
    </location>
</feature>
<feature type="disulfide bond" evidence="4">
    <location>
        <begin position="46"/>
        <end position="67"/>
    </location>
</feature>
<evidence type="ECO:0000250" key="1"/>
<evidence type="ECO:0000250" key="2">
    <source>
        <dbReference type="UniProtKB" id="P10280"/>
    </source>
</evidence>
<evidence type="ECO:0000250" key="3">
    <source>
        <dbReference type="UniProtKB" id="Q9TWF8"/>
    </source>
</evidence>
<evidence type="ECO:0000255" key="4">
    <source>
        <dbReference type="PROSITE-ProRule" id="PRU00031"/>
    </source>
</evidence>
<evidence type="ECO:0000269" key="5">
    <source>
    </source>
</evidence>
<evidence type="ECO:0000303" key="6">
    <source>
    </source>
</evidence>
<evidence type="ECO:0000303" key="7">
    <source>
    </source>
</evidence>
<evidence type="ECO:0000305" key="8"/>
<evidence type="ECO:0000305" key="9">
    <source>
    </source>
</evidence>
<sequence length="87" mass="10006">MVFLLCFFLVADVSYGINKDCLLPKVVGFCRARFPRYYYNSSSRRCEKFIYGGCGGNANNFSSYYECHIKCFGPRAIIFPEDSPKEN</sequence>
<dbReference type="EMBL" id="FK727748">
    <property type="status" value="NOT_ANNOTATED_CDS"/>
    <property type="molecule type" value="mRNA"/>
</dbReference>
<dbReference type="EMBL" id="FK757246">
    <property type="status" value="NOT_ANNOTATED_CDS"/>
    <property type="molecule type" value="mRNA"/>
</dbReference>
<dbReference type="SMR" id="P0DN15"/>
<dbReference type="GO" id="GO:0005615">
    <property type="term" value="C:extracellular space"/>
    <property type="evidence" value="ECO:0007669"/>
    <property type="project" value="TreeGrafter"/>
</dbReference>
<dbReference type="GO" id="GO:0042151">
    <property type="term" value="C:nematocyst"/>
    <property type="evidence" value="ECO:0007669"/>
    <property type="project" value="UniProtKB-SubCell"/>
</dbReference>
<dbReference type="GO" id="GO:0015459">
    <property type="term" value="F:potassium channel regulator activity"/>
    <property type="evidence" value="ECO:0007669"/>
    <property type="project" value="UniProtKB-KW"/>
</dbReference>
<dbReference type="GO" id="GO:0004867">
    <property type="term" value="F:serine-type endopeptidase inhibitor activity"/>
    <property type="evidence" value="ECO:0007669"/>
    <property type="project" value="UniProtKB-KW"/>
</dbReference>
<dbReference type="GO" id="GO:0090729">
    <property type="term" value="F:toxin activity"/>
    <property type="evidence" value="ECO:0007669"/>
    <property type="project" value="UniProtKB-KW"/>
</dbReference>
<dbReference type="FunFam" id="4.10.410.10:FF:000021">
    <property type="entry name" value="Serine protease inhibitor, putative"/>
    <property type="match status" value="1"/>
</dbReference>
<dbReference type="Gene3D" id="4.10.410.10">
    <property type="entry name" value="Pancreatic trypsin inhibitor Kunitz domain"/>
    <property type="match status" value="1"/>
</dbReference>
<dbReference type="InterPro" id="IPR002223">
    <property type="entry name" value="Kunitz_BPTI"/>
</dbReference>
<dbReference type="InterPro" id="IPR036880">
    <property type="entry name" value="Kunitz_BPTI_sf"/>
</dbReference>
<dbReference type="InterPro" id="IPR020901">
    <property type="entry name" value="Prtase_inh_Kunz-CS"/>
</dbReference>
<dbReference type="InterPro" id="IPR050098">
    <property type="entry name" value="TFPI/VKTCI-like"/>
</dbReference>
<dbReference type="PANTHER" id="PTHR10083">
    <property type="entry name" value="KUNITZ-TYPE PROTEASE INHIBITOR-RELATED"/>
    <property type="match status" value="1"/>
</dbReference>
<dbReference type="PANTHER" id="PTHR10083:SF376">
    <property type="entry name" value="SERINE PEPTIDASE INHIBITOR, KUNITZ TYPE, 3"/>
    <property type="match status" value="1"/>
</dbReference>
<dbReference type="Pfam" id="PF00014">
    <property type="entry name" value="Kunitz_BPTI"/>
    <property type="match status" value="1"/>
</dbReference>
<dbReference type="PRINTS" id="PR00759">
    <property type="entry name" value="BASICPTASE"/>
</dbReference>
<dbReference type="SMART" id="SM00131">
    <property type="entry name" value="KU"/>
    <property type="match status" value="1"/>
</dbReference>
<dbReference type="SUPFAM" id="SSF57362">
    <property type="entry name" value="BPTI-like"/>
    <property type="match status" value="1"/>
</dbReference>
<dbReference type="PROSITE" id="PS00280">
    <property type="entry name" value="BPTI_KUNITZ_1"/>
    <property type="match status" value="1"/>
</dbReference>
<dbReference type="PROSITE" id="PS50279">
    <property type="entry name" value="BPTI_KUNITZ_2"/>
    <property type="match status" value="1"/>
</dbReference>
<comment type="function">
    <text evidence="2 3 5">Kunitz peptide that directly activates neuronal GIRK1/2 (KCNJ3/KCNJ6) channels (EC(50)=80.9 uM) resulting in larger K+ currents. This activation is independent from Gi/o protein activity, and has only a minor effect on Kv1.6/KCNA6 channels (13.5% inhibition at 1 uM) (PubMed:35200669). Serine protease inhibitor that inhibits both tissue and plasma kallikreins (By similarity). Has hemolytic activity (By similarity).</text>
</comment>
<comment type="subcellular location">
    <subcellularLocation>
        <location evidence="5">Secreted</location>
    </subcellularLocation>
    <subcellularLocation>
        <location evidence="8">Nematocyst</location>
    </subcellularLocation>
</comment>
<comment type="mass spectrometry" mass="6851.6" method="MALDI" evidence="5">
    <text>Average mass.</text>
</comment>
<comment type="miscellaneous">
    <text evidence="5">Negative results: does nos affect the inward-rectifier potassium channel (KCNJ2/IRK1), as well as Kv1.1/KCNA1, Kv1.2/KCNA2, Kv1.3/KCNA3, and Kv1.4/KCNA4.</text>
</comment>
<comment type="similarity">
    <text evidence="8">Belongs to the venom Kunitz-type family. Sea anemone type 2 potassium channel toxin subfamily.</text>
</comment>
<comment type="caution">
    <text evidence="8">Opinions are divided on whether Anemonia viridis (Forsskal, 1775) and Anemonia sulcata (Pennant, 1777) are separate species.</text>
</comment>
<keyword id="KW-0903">Direct protein sequencing</keyword>
<keyword id="KW-1015">Disulfide bond</keyword>
<keyword id="KW-0872">Ion channel impairing toxin</keyword>
<keyword id="KW-0166">Nematocyst</keyword>
<keyword id="KW-0632">Potassium channel impairing toxin</keyword>
<keyword id="KW-0646">Protease inhibitor</keyword>
<keyword id="KW-0964">Secreted</keyword>
<keyword id="KW-0722">Serine protease inhibitor</keyword>
<keyword id="KW-0732">Signal</keyword>
<keyword id="KW-0800">Toxin</keyword>
<keyword id="KW-1220">Voltage-gated potassium channel impairing toxin</keyword>
<reference key="1">
    <citation type="journal article" date="2009" name="BMC Genomics">
        <title>Comprehensive EST analysis of the symbiotic sea anemone, Anemonia viridis.</title>
        <authorList>
            <person name="Sabourault C."/>
            <person name="Ganot P."/>
            <person name="Deleury E."/>
            <person name="Allemand D."/>
            <person name="Furla P."/>
        </authorList>
    </citation>
    <scope>NUCLEOTIDE SEQUENCE [MRNA]</scope>
</reference>
<reference key="2">
    <citation type="journal article" date="2022" name="Mar. Drugs">
        <title>AsKC11, a kunitz peptide from Anemonia sulcata, is a novel activator of G protein-coupled inward-rectifier potassium channels.</title>
        <authorList>
            <person name="An D."/>
            <person name="Pinheiro-Junior E.L."/>
            <person name="Beress L."/>
            <person name="Gladkikh I."/>
            <person name="Leychenko E."/>
            <person name="Undheim E.A.B."/>
            <person name="Peigneur S."/>
            <person name="Tytgat J."/>
        </authorList>
    </citation>
    <scope>PARTIAL PROTEIN SEQUENCE</scope>
    <scope>FUNCTION</scope>
    <scope>MASS SPECTROMETRY</scope>
    <scope>RECOMBINANT EXPRESSION</scope>
    <scope>SUBCELLULAR LOCATION</scope>
</reference>
<reference key="3">
    <citation type="journal article" date="2011" name="BMC Genomics">
        <title>The mining of toxin-like polypeptides from EST database by single residue distribution analysis.</title>
        <authorList>
            <person name="Kozlov S."/>
            <person name="Grishin E."/>
        </authorList>
    </citation>
    <scope>NOMENCLATURE</scope>
</reference>
<reference key="4">
    <citation type="journal article" date="2012" name="Toxicon">
        <title>Development of a rational nomenclature for naming peptide and protein toxins from sea anemones.</title>
        <authorList>
            <person name="Oliveira J.S."/>
            <person name="Fuentes-Silva D."/>
            <person name="King G.F."/>
        </authorList>
    </citation>
    <scope>NOMENCLATURE</scope>
</reference>
<proteinExistence type="evidence at protein level"/>
<accession>P0DN15</accession>